<reference evidence="9" key="1">
    <citation type="journal article" date="2002" name="Nature">
        <title>Genome sequence of the human malaria parasite Plasmodium falciparum.</title>
        <authorList>
            <person name="Gardner M.J."/>
            <person name="Hall N."/>
            <person name="Fung E."/>
            <person name="White O."/>
            <person name="Berriman M."/>
            <person name="Hyman R.W."/>
            <person name="Carlton J.M."/>
            <person name="Pain A."/>
            <person name="Nelson K.E."/>
            <person name="Bowman S."/>
            <person name="Paulsen I.T."/>
            <person name="James K.D."/>
            <person name="Eisen J.A."/>
            <person name="Rutherford K.M."/>
            <person name="Salzberg S.L."/>
            <person name="Craig A."/>
            <person name="Kyes S."/>
            <person name="Chan M.-S."/>
            <person name="Nene V."/>
            <person name="Shallom S.J."/>
            <person name="Suh B."/>
            <person name="Peterson J."/>
            <person name="Angiuoli S."/>
            <person name="Pertea M."/>
            <person name="Allen J."/>
            <person name="Selengut J."/>
            <person name="Haft D."/>
            <person name="Mather M.W."/>
            <person name="Vaidya A.B."/>
            <person name="Martin D.M.A."/>
            <person name="Fairlamb A.H."/>
            <person name="Fraunholz M.J."/>
            <person name="Roos D.S."/>
            <person name="Ralph S.A."/>
            <person name="McFadden G.I."/>
            <person name="Cummings L.M."/>
            <person name="Subramanian G.M."/>
            <person name="Mungall C."/>
            <person name="Venter J.C."/>
            <person name="Carucci D.J."/>
            <person name="Hoffman S.L."/>
            <person name="Newbold C."/>
            <person name="Davis R.W."/>
            <person name="Fraser C.M."/>
            <person name="Barrell B.G."/>
        </authorList>
    </citation>
    <scope>NUCLEOTIDE SEQUENCE [LARGE SCALE GENOMIC DNA]</scope>
    <source>
        <strain evidence="9">3D7</strain>
    </source>
</reference>
<reference evidence="9" key="2">
    <citation type="journal article" date="2002" name="Nature">
        <title>Sequence of Plasmodium falciparum chromosomes 1, 3-9 and 13.</title>
        <authorList>
            <person name="Hall N."/>
            <person name="Pain A."/>
            <person name="Berriman M."/>
            <person name="Churcher C.M."/>
            <person name="Harris B."/>
            <person name="Harris D."/>
            <person name="Mungall K.L."/>
            <person name="Bowman S."/>
            <person name="Atkin R."/>
            <person name="Baker S."/>
            <person name="Barron A."/>
            <person name="Brooks K."/>
            <person name="Buckee C.O."/>
            <person name="Burrows C."/>
            <person name="Cherevach I."/>
            <person name="Chillingworth C."/>
            <person name="Chillingworth T."/>
            <person name="Christodoulou Z."/>
            <person name="Clark L."/>
            <person name="Clark R."/>
            <person name="Corton C."/>
            <person name="Cronin A."/>
            <person name="Davies R.M."/>
            <person name="Davis P."/>
            <person name="Dear P."/>
            <person name="Dearden F."/>
            <person name="Doggett J."/>
            <person name="Feltwell T."/>
            <person name="Goble A."/>
            <person name="Goodhead I."/>
            <person name="Gwilliam R."/>
            <person name="Hamlin N."/>
            <person name="Hance Z."/>
            <person name="Harper D."/>
            <person name="Hauser H."/>
            <person name="Hornsby T."/>
            <person name="Holroyd S."/>
            <person name="Horrocks P."/>
            <person name="Humphray S."/>
            <person name="Jagels K."/>
            <person name="James K.D."/>
            <person name="Johnson D."/>
            <person name="Kerhornou A."/>
            <person name="Knights A."/>
            <person name="Konfortov B."/>
            <person name="Kyes S."/>
            <person name="Larke N."/>
            <person name="Lawson D."/>
            <person name="Lennard N."/>
            <person name="Line A."/>
            <person name="Maddison M."/>
            <person name="Mclean J."/>
            <person name="Mooney P."/>
            <person name="Moule S."/>
            <person name="Murphy L."/>
            <person name="Oliver K."/>
            <person name="Ormond D."/>
            <person name="Price C."/>
            <person name="Quail M.A."/>
            <person name="Rabbinowitsch E."/>
            <person name="Rajandream M.A."/>
            <person name="Rutter S."/>
            <person name="Rutherford K.M."/>
            <person name="Sanders M."/>
            <person name="Simmonds M."/>
            <person name="Seeger K."/>
            <person name="Sharp S."/>
            <person name="Smith R."/>
            <person name="Squares R."/>
            <person name="Squares S."/>
            <person name="Stevens K."/>
            <person name="Taylor K."/>
            <person name="Tivey A."/>
            <person name="Unwin L."/>
            <person name="Whitehead S."/>
            <person name="Woodward J.R."/>
            <person name="Sulston J.E."/>
            <person name="Craig A."/>
            <person name="Newbold C."/>
            <person name="Barrell B.G."/>
        </authorList>
    </citation>
    <scope>NUCLEOTIDE SEQUENCE [LARGE SCALE GENOMIC DNA]</scope>
    <source>
        <strain evidence="9">3D7</strain>
    </source>
</reference>
<reference evidence="6" key="3">
    <citation type="journal article" date="2024" name="PLoS Pathog.">
        <title>ATM1, an essential conserved transporter in Apicomplexa, bridges mitochondrial and cytosolic [Fe-S] biogenesis.</title>
        <authorList>
            <person name="Shrivastava D."/>
            <person name="Abboud E."/>
            <person name="Ramchandra J.P."/>
            <person name="Jha A."/>
            <person name="Marq J.B."/>
            <person name="Chaurasia A."/>
            <person name="Mitra K."/>
            <person name="Sadik M."/>
            <person name="Siddiqi M.I."/>
            <person name="Soldati-Favre D."/>
            <person name="Kloehn J."/>
            <person name="Habib S."/>
        </authorList>
    </citation>
    <scope>FUNCTION</scope>
    <scope>CATALYTIC ACTIVITY</scope>
    <scope>ACTIVITY REGULATION</scope>
    <scope>BIOPHYSICOCHEMICAL PROPERTIES</scope>
    <scope>SUBUNIT</scope>
    <scope>INTERACTION WITH ISCU; ISCA2; MHCF101/CFD1 AND NBP35</scope>
    <scope>SUBCELLULAR LOCATION</scope>
    <scope>DISRUPTION PHENOTYPE</scope>
    <scope>MUTAGENESIS OF ARG-534 AND GLU-972</scope>
</reference>
<organism evidence="9">
    <name type="scientific">Plasmodium falciparum (isolate 3D7)</name>
    <dbReference type="NCBI Taxonomy" id="36329"/>
    <lineage>
        <taxon>Eukaryota</taxon>
        <taxon>Sar</taxon>
        <taxon>Alveolata</taxon>
        <taxon>Apicomplexa</taxon>
        <taxon>Aconoidasida</taxon>
        <taxon>Haemosporida</taxon>
        <taxon>Plasmodiidae</taxon>
        <taxon>Plasmodium</taxon>
        <taxon>Plasmodium (Laverania)</taxon>
    </lineage>
</organism>
<comment type="function">
    <text evidence="4">Transports glutathione-coordinated [4Fe-4S] iron-sulfur clusters in an ATP-dependent manner (PubMed:39348385). Required for optimal parasite growth during erythrocytic stages (PubMed:39348385).</text>
</comment>
<comment type="activity regulation">
    <text evidence="4">ATPase activity is stimulated by reduced glutathione.</text>
</comment>
<comment type="biophysicochemical properties">
    <kinetics>
        <KM evidence="4">178.9 uM for ATP (in the absence of reduced glutathione)</KM>
        <KM evidence="4">35.41 uM for ATP (in the presence of reduced glutathione)</KM>
        <text evidence="4">kcat is 7.74 min(-1) with ATP as substrate (in the absence of reduced glutathione) (PubMed:39348385). kcat is 18.38 min(-1) with ATP as substrate (in the presence of reduced glutathione) (PubMed:39348385).</text>
    </kinetics>
</comment>
<comment type="subunit">
    <text evidence="4">Homodimer (PubMed:39348385). Interacts with ISCU (PubMed:39348385). Interacts with IscA2 (PubMed:39348385). Interacts with NBP35 (PubMed:39348385). Interacts with mHCF101 (PubMed:39348385).</text>
</comment>
<comment type="subcellular location">
    <subcellularLocation>
        <location evidence="7">Mitochondrion membrane</location>
        <topology evidence="1">Multi-pass membrane protein</topology>
    </subcellularLocation>
</comment>
<comment type="disruption phenotype">
    <text evidence="4">Conditional knockdown results in parasite growth delay during erythrocytic stages (PubMed:39348385). Accumulation of organellar iron (PubMed:39348385). No significant effects on parasitemia (PubMed:39348385). No significant effects on mitochondrial morphology (PubMed:39348385).</text>
</comment>
<comment type="similarity">
    <text evidence="6">Belongs to the ABC transporter superfamily. ABCB family. Heavy Metal importer (TC 3.A.1.210) subfamily.</text>
</comment>
<feature type="transit peptide" description="Mitochondrion" evidence="1">
    <location>
        <begin position="1"/>
        <end position="90"/>
    </location>
</feature>
<feature type="chain" id="PRO_0000461955" description="ABC transporter ATM1" evidence="1">
    <location>
        <begin position="91"/>
        <end position="1049"/>
    </location>
</feature>
<feature type="transmembrane region" description="Helical" evidence="1 3">
    <location>
        <begin position="357"/>
        <end position="377"/>
    </location>
</feature>
<feature type="transmembrane region" description="Helical" evidence="1 3">
    <location>
        <begin position="397"/>
        <end position="419"/>
    </location>
</feature>
<feature type="transmembrane region" description="Helical" evidence="1 3">
    <location>
        <begin position="481"/>
        <end position="501"/>
    </location>
</feature>
<feature type="transmembrane region" description="Helical" evidence="1 3">
    <location>
        <begin position="506"/>
        <end position="526"/>
    </location>
</feature>
<feature type="transmembrane region" description="Helical" evidence="1 3">
    <location>
        <begin position="591"/>
        <end position="611"/>
    </location>
</feature>
<feature type="transmembrane region" description="Helical" evidence="1 3">
    <location>
        <begin position="619"/>
        <end position="639"/>
    </location>
</feature>
<feature type="domain" description="ABC transmembrane type-1" evidence="3">
    <location>
        <begin position="360"/>
        <end position="651"/>
    </location>
</feature>
<feature type="domain" description="ABC transporter" evidence="2">
    <location>
        <begin position="807"/>
        <end position="1043"/>
    </location>
</feature>
<feature type="binding site" evidence="2">
    <location>
        <begin position="843"/>
        <end position="850"/>
    </location>
    <ligand>
        <name>ATP</name>
        <dbReference type="ChEBI" id="CHEBI:30616"/>
    </ligand>
</feature>
<feature type="mutagenesis site" description="Putative binding site for reduced glutathione; reduces ATPase activity in the presence of reduced glutathione." evidence="4">
    <original>R</original>
    <variation>E</variation>
    <location>
        <position position="534"/>
    </location>
</feature>
<feature type="mutagenesis site" description="Reduces ATPase activity. Reduces glutathione transport." evidence="4">
    <original>E</original>
    <variation>Q</variation>
    <location>
        <position position="972"/>
    </location>
</feature>
<gene>
    <name evidence="6" type="primary">ABCB6</name>
    <name evidence="8" type="ORF">PF3D7_1352100</name>
</gene>
<sequence>MRSFYNKCFTNKLISAHSLFCQHVSTLKNNKKECFEDVKRSNRISDEFYSSFLYHSYIENLKSTKEYVYFIYLQDIYYNINIFKNKGRLYISNNGLCNDKLKDNNNNNNINSNNFGNSYNAYTKKKSFYHSFNDLNEAKEIRKKRKNEKSEKNIVEYLLCNIINPNENYHIQNIYNHNLNNNVSIEIHKKNDSVMYHYNNEKKTKTSKMTTDIKLKQINNVYIKYVPYKNKIITLACPNKYYPTLYRYFSSHTNKKEDAEENDKNKNININNVDNRYKEDFMYGCENKNDSEKHKKTTNNNFGDEFEKLKVKELDKILNKLEMLYDNKNNKMNINVKILGYIFKNFLLKNKELKRKIFCSLFFLLCSKMAIIYTPILLSTFIENVNLQKSLSNNIDIYSTNKSSVLLLCAYVFSRVLSSTMNELRNSVFSNISQKISTFVSKLFFYKIHNLNLTYILSKKNGELSFIFNRGCKSITNLLNVMVFQIIPIIIEFILYLYILTYKIHYTVSLVTCFNMFLYVLFTTLITKRRTIIRKHMNKAEQNTFNIFLDSIQNVEQVKYYTNEIHELKKFIKEQKKYEKEAINVQKSLSFLNFGQQIILNTNLFLCMYLTYLNIANDIFPFSYLILVNTLLFQLAMPLNMFGTIYRETKLSLVDIESMIKILVKKIKSPDYGNQMLIKNGNIKFENVYFKYPLNEDINGLEQNYQAKEKDPNIINNINNINNINNINNINNINSINNIYTFESNVKNISSTNMITSSINKLKKWYLDKVKDNKKNVQYNNNDVKKTNPNITKNLNKEIKENINTHLKNHKIINNSPNYNNNNYLFQNFTCNIENGEKVAIIGKSGSGKSSLIKLLLKFYEVNSGNIYIDNKNIDDIDLYTLRKNISVVPQDTILFNNTISYNIKYGNFQCTDKQMIQASIKAELHDKIMKMENKYDTIVGERGTKLSIGEKQRICIARCFLKDSKIIVLDEHASNLDNENKKAIEKALTKLCMGKTTFIITHVMENLKHMDKIIFFCGKNIYVGSHKNLMDDNHFYREYYDSKNNKML</sequence>
<dbReference type="EC" id="7.-.-.-" evidence="4"/>
<dbReference type="EMBL" id="AL844509">
    <property type="protein sequence ID" value="CAD52642.1"/>
    <property type="molecule type" value="Genomic_DNA"/>
</dbReference>
<dbReference type="RefSeq" id="XP_001350233.1">
    <property type="nucleotide sequence ID" value="XM_001350197.1"/>
</dbReference>
<dbReference type="SMR" id="Q8IDH9"/>
<dbReference type="STRING" id="36329.Q8IDH9"/>
<dbReference type="PaxDb" id="5833-PF13_0271"/>
<dbReference type="EnsemblProtists" id="CAD52642">
    <property type="protein sequence ID" value="CAD52642"/>
    <property type="gene ID" value="PF3D7_1352100"/>
</dbReference>
<dbReference type="GeneID" id="814236"/>
<dbReference type="KEGG" id="pfa:PF3D7_1352100"/>
<dbReference type="VEuPathDB" id="PlasmoDB:PF3D7_1352100"/>
<dbReference type="HOGENOM" id="CLU_000604_24_0_1"/>
<dbReference type="InParanoid" id="Q8IDH9"/>
<dbReference type="OMA" id="QMIDACI"/>
<dbReference type="OrthoDB" id="2876209at2759"/>
<dbReference type="PhylomeDB" id="Q8IDH9"/>
<dbReference type="Proteomes" id="UP000001450">
    <property type="component" value="Chromosome 13"/>
</dbReference>
<dbReference type="GO" id="GO:0016020">
    <property type="term" value="C:membrane"/>
    <property type="evidence" value="ECO:0000250"/>
    <property type="project" value="GeneDB"/>
</dbReference>
<dbReference type="GO" id="GO:0031966">
    <property type="term" value="C:mitochondrial membrane"/>
    <property type="evidence" value="ECO:0007669"/>
    <property type="project" value="UniProtKB-SubCell"/>
</dbReference>
<dbReference type="GO" id="GO:0140359">
    <property type="term" value="F:ABC-type transporter activity"/>
    <property type="evidence" value="ECO:0007669"/>
    <property type="project" value="InterPro"/>
</dbReference>
<dbReference type="GO" id="GO:0005524">
    <property type="term" value="F:ATP binding"/>
    <property type="evidence" value="ECO:0000250"/>
    <property type="project" value="GeneDB"/>
</dbReference>
<dbReference type="GO" id="GO:0016887">
    <property type="term" value="F:ATP hydrolysis activity"/>
    <property type="evidence" value="ECO:0007669"/>
    <property type="project" value="InterPro"/>
</dbReference>
<dbReference type="GO" id="GO:0042626">
    <property type="term" value="F:ATPase-coupled transmembrane transporter activity"/>
    <property type="evidence" value="ECO:0000250"/>
    <property type="project" value="GeneDB"/>
</dbReference>
<dbReference type="GO" id="GO:0055085">
    <property type="term" value="P:transmembrane transport"/>
    <property type="evidence" value="ECO:0000318"/>
    <property type="project" value="GO_Central"/>
</dbReference>
<dbReference type="CDD" id="cd18582">
    <property type="entry name" value="ABC_6TM_ATM1_ABCB7"/>
    <property type="match status" value="1"/>
</dbReference>
<dbReference type="FunFam" id="1.20.1560.10:FF:000120">
    <property type="entry name" value="ABC transporter B family member 6"/>
    <property type="match status" value="1"/>
</dbReference>
<dbReference type="FunFam" id="3.40.50.300:FF:001765">
    <property type="entry name" value="ABC transporter B family member 6"/>
    <property type="match status" value="1"/>
</dbReference>
<dbReference type="Gene3D" id="1.20.1560.10">
    <property type="entry name" value="ABC transporter type 1, transmembrane domain"/>
    <property type="match status" value="2"/>
</dbReference>
<dbReference type="Gene3D" id="3.40.50.300">
    <property type="entry name" value="P-loop containing nucleotide triphosphate hydrolases"/>
    <property type="match status" value="1"/>
</dbReference>
<dbReference type="InterPro" id="IPR003593">
    <property type="entry name" value="AAA+_ATPase"/>
</dbReference>
<dbReference type="InterPro" id="IPR011527">
    <property type="entry name" value="ABC1_TM_dom"/>
</dbReference>
<dbReference type="InterPro" id="IPR036640">
    <property type="entry name" value="ABC1_TM_sf"/>
</dbReference>
<dbReference type="InterPro" id="IPR003439">
    <property type="entry name" value="ABC_transporter-like_ATP-bd"/>
</dbReference>
<dbReference type="InterPro" id="IPR027417">
    <property type="entry name" value="P-loop_NTPase"/>
</dbReference>
<dbReference type="InterPro" id="IPR039421">
    <property type="entry name" value="Type_1_exporter"/>
</dbReference>
<dbReference type="PANTHER" id="PTHR24221">
    <property type="entry name" value="ATP-BINDING CASSETTE SUB-FAMILY B"/>
    <property type="match status" value="1"/>
</dbReference>
<dbReference type="PANTHER" id="PTHR24221:SF503">
    <property type="entry name" value="MITOCHONDRIAL POTASSIUM CHANNEL ATP-BINDING SUBUNIT"/>
    <property type="match status" value="1"/>
</dbReference>
<dbReference type="Pfam" id="PF00664">
    <property type="entry name" value="ABC_membrane"/>
    <property type="match status" value="1"/>
</dbReference>
<dbReference type="Pfam" id="PF00005">
    <property type="entry name" value="ABC_tran"/>
    <property type="match status" value="1"/>
</dbReference>
<dbReference type="SMART" id="SM00382">
    <property type="entry name" value="AAA"/>
    <property type="match status" value="1"/>
</dbReference>
<dbReference type="SUPFAM" id="SSF90123">
    <property type="entry name" value="ABC transporter transmembrane region"/>
    <property type="match status" value="1"/>
</dbReference>
<dbReference type="SUPFAM" id="SSF52540">
    <property type="entry name" value="P-loop containing nucleoside triphosphate hydrolases"/>
    <property type="match status" value="1"/>
</dbReference>
<dbReference type="PROSITE" id="PS50929">
    <property type="entry name" value="ABC_TM1F"/>
    <property type="match status" value="1"/>
</dbReference>
<dbReference type="PROSITE" id="PS50893">
    <property type="entry name" value="ABC_TRANSPORTER_2"/>
    <property type="match status" value="1"/>
</dbReference>
<evidence type="ECO:0000255" key="1"/>
<evidence type="ECO:0000255" key="2">
    <source>
        <dbReference type="PROSITE-ProRule" id="PRU00434"/>
    </source>
</evidence>
<evidence type="ECO:0000255" key="3">
    <source>
        <dbReference type="PROSITE-ProRule" id="PRU00441"/>
    </source>
</evidence>
<evidence type="ECO:0000269" key="4">
    <source>
    </source>
</evidence>
<evidence type="ECO:0000303" key="5">
    <source>
    </source>
</evidence>
<evidence type="ECO:0000305" key="6"/>
<evidence type="ECO:0000305" key="7">
    <source>
    </source>
</evidence>
<evidence type="ECO:0000312" key="8">
    <source>
        <dbReference type="EMBL" id="CAD52642.1"/>
    </source>
</evidence>
<evidence type="ECO:0000312" key="9">
    <source>
        <dbReference type="Proteomes" id="UP000001450"/>
    </source>
</evidence>
<name>ATM1_PLAF7</name>
<keyword id="KW-0004">4Fe-4S</keyword>
<keyword id="KW-0067">ATP-binding</keyword>
<keyword id="KW-0408">Iron</keyword>
<keyword id="KW-0411">Iron-sulfur</keyword>
<keyword id="KW-0472">Membrane</keyword>
<keyword id="KW-0479">Metal-binding</keyword>
<keyword id="KW-0496">Mitochondrion</keyword>
<keyword id="KW-0547">Nucleotide-binding</keyword>
<keyword id="KW-1185">Reference proteome</keyword>
<keyword id="KW-0809">Transit peptide</keyword>
<keyword id="KW-1278">Translocase</keyword>
<keyword id="KW-0812">Transmembrane</keyword>
<keyword id="KW-1133">Transmembrane helix</keyword>
<proteinExistence type="evidence at protein level"/>
<protein>
    <recommendedName>
        <fullName evidence="6">ABC transporter ATM1</fullName>
        <shortName evidence="5">PfATM1</shortName>
        <ecNumber evidence="4">7.-.-.-</ecNumber>
    </recommendedName>
    <alternativeName>
        <fullName evidence="8">ABC transporter B family member 6, putative</fullName>
        <shortName evidence="5">PfABCB6</shortName>
    </alternativeName>
    <alternativeName>
        <fullName evidence="5">PfMDR6</fullName>
    </alternativeName>
</protein>
<accession>Q8IDH9</accession>